<sequence>MAKLKTRRGAAKRFKATANGFKRKQAFKRHILTKKSAKRIRQLRGCVMVHVSDMNSVRRMCPYI</sequence>
<dbReference type="EMBL" id="CR543861">
    <property type="protein sequence ID" value="CAG69748.1"/>
    <property type="molecule type" value="Genomic_DNA"/>
</dbReference>
<dbReference type="RefSeq" id="WP_002054552.1">
    <property type="nucleotide sequence ID" value="NC_005966.1"/>
</dbReference>
<dbReference type="SMR" id="Q6F867"/>
<dbReference type="STRING" id="202950.GCA_001485005_02708"/>
<dbReference type="GeneID" id="92795205"/>
<dbReference type="KEGG" id="aci:ACIAD3047"/>
<dbReference type="eggNOG" id="COG0291">
    <property type="taxonomic scope" value="Bacteria"/>
</dbReference>
<dbReference type="HOGENOM" id="CLU_169643_1_1_6"/>
<dbReference type="OrthoDB" id="47476at2"/>
<dbReference type="BioCyc" id="ASP62977:ACIAD_RS13775-MONOMER"/>
<dbReference type="Proteomes" id="UP000000430">
    <property type="component" value="Chromosome"/>
</dbReference>
<dbReference type="GO" id="GO:0022625">
    <property type="term" value="C:cytosolic large ribosomal subunit"/>
    <property type="evidence" value="ECO:0007669"/>
    <property type="project" value="TreeGrafter"/>
</dbReference>
<dbReference type="GO" id="GO:0003735">
    <property type="term" value="F:structural constituent of ribosome"/>
    <property type="evidence" value="ECO:0007669"/>
    <property type="project" value="InterPro"/>
</dbReference>
<dbReference type="GO" id="GO:0006412">
    <property type="term" value="P:translation"/>
    <property type="evidence" value="ECO:0007669"/>
    <property type="project" value="UniProtKB-UniRule"/>
</dbReference>
<dbReference type="FunFam" id="4.10.410.60:FF:000001">
    <property type="entry name" value="50S ribosomal protein L35"/>
    <property type="match status" value="1"/>
</dbReference>
<dbReference type="Gene3D" id="4.10.410.60">
    <property type="match status" value="1"/>
</dbReference>
<dbReference type="HAMAP" id="MF_00514">
    <property type="entry name" value="Ribosomal_bL35"/>
    <property type="match status" value="1"/>
</dbReference>
<dbReference type="InterPro" id="IPR001706">
    <property type="entry name" value="Ribosomal_bL35"/>
</dbReference>
<dbReference type="InterPro" id="IPR021137">
    <property type="entry name" value="Ribosomal_bL35-like"/>
</dbReference>
<dbReference type="InterPro" id="IPR018265">
    <property type="entry name" value="Ribosomal_bL35_CS"/>
</dbReference>
<dbReference type="InterPro" id="IPR037229">
    <property type="entry name" value="Ribosomal_bL35_sf"/>
</dbReference>
<dbReference type="NCBIfam" id="TIGR00001">
    <property type="entry name" value="rpmI_bact"/>
    <property type="match status" value="1"/>
</dbReference>
<dbReference type="PANTHER" id="PTHR33343">
    <property type="entry name" value="54S RIBOSOMAL PROTEIN BL35M"/>
    <property type="match status" value="1"/>
</dbReference>
<dbReference type="PANTHER" id="PTHR33343:SF1">
    <property type="entry name" value="LARGE RIBOSOMAL SUBUNIT PROTEIN BL35M"/>
    <property type="match status" value="1"/>
</dbReference>
<dbReference type="Pfam" id="PF01632">
    <property type="entry name" value="Ribosomal_L35p"/>
    <property type="match status" value="1"/>
</dbReference>
<dbReference type="PRINTS" id="PR00064">
    <property type="entry name" value="RIBOSOMALL35"/>
</dbReference>
<dbReference type="SUPFAM" id="SSF143034">
    <property type="entry name" value="L35p-like"/>
    <property type="match status" value="1"/>
</dbReference>
<dbReference type="PROSITE" id="PS00936">
    <property type="entry name" value="RIBOSOMAL_L35"/>
    <property type="match status" value="1"/>
</dbReference>
<gene>
    <name evidence="1" type="primary">rpmI</name>
    <name type="ordered locus">ACIAD3047</name>
</gene>
<comment type="similarity">
    <text evidence="1">Belongs to the bacterial ribosomal protein bL35 family.</text>
</comment>
<keyword id="KW-0687">Ribonucleoprotein</keyword>
<keyword id="KW-0689">Ribosomal protein</keyword>
<reference key="1">
    <citation type="journal article" date="2004" name="Nucleic Acids Res.">
        <title>Unique features revealed by the genome sequence of Acinetobacter sp. ADP1, a versatile and naturally transformation competent bacterium.</title>
        <authorList>
            <person name="Barbe V."/>
            <person name="Vallenet D."/>
            <person name="Fonknechten N."/>
            <person name="Kreimeyer A."/>
            <person name="Oztas S."/>
            <person name="Labarre L."/>
            <person name="Cruveiller S."/>
            <person name="Robert C."/>
            <person name="Duprat S."/>
            <person name="Wincker P."/>
            <person name="Ornston L.N."/>
            <person name="Weissenbach J."/>
            <person name="Marliere P."/>
            <person name="Cohen G.N."/>
            <person name="Medigue C."/>
        </authorList>
    </citation>
    <scope>NUCLEOTIDE SEQUENCE [LARGE SCALE GENOMIC DNA]</scope>
    <source>
        <strain>ATCC 33305 / BD413 / ADP1</strain>
    </source>
</reference>
<proteinExistence type="inferred from homology"/>
<name>RL35_ACIAD</name>
<evidence type="ECO:0000255" key="1">
    <source>
        <dbReference type="HAMAP-Rule" id="MF_00514"/>
    </source>
</evidence>
<evidence type="ECO:0000305" key="2"/>
<feature type="chain" id="PRO_0000177315" description="Large ribosomal subunit protein bL35">
    <location>
        <begin position="1"/>
        <end position="64"/>
    </location>
</feature>
<accession>Q6F867</accession>
<organism>
    <name type="scientific">Acinetobacter baylyi (strain ATCC 33305 / BD413 / ADP1)</name>
    <dbReference type="NCBI Taxonomy" id="62977"/>
    <lineage>
        <taxon>Bacteria</taxon>
        <taxon>Pseudomonadati</taxon>
        <taxon>Pseudomonadota</taxon>
        <taxon>Gammaproteobacteria</taxon>
        <taxon>Moraxellales</taxon>
        <taxon>Moraxellaceae</taxon>
        <taxon>Acinetobacter</taxon>
    </lineage>
</organism>
<protein>
    <recommendedName>
        <fullName evidence="1">Large ribosomal subunit protein bL35</fullName>
    </recommendedName>
    <alternativeName>
        <fullName evidence="2">50S ribosomal protein L35</fullName>
    </alternativeName>
</protein>